<name>PMS1_DICDI</name>
<dbReference type="EMBL" id="AAFI02000058">
    <property type="protein sequence ID" value="EAL65478.1"/>
    <property type="molecule type" value="Genomic_DNA"/>
</dbReference>
<dbReference type="RefSeq" id="XP_638844.1">
    <property type="nucleotide sequence ID" value="XM_633752.1"/>
</dbReference>
<dbReference type="SMR" id="Q54QA0"/>
<dbReference type="FunCoup" id="Q54QA0">
    <property type="interactions" value="505"/>
</dbReference>
<dbReference type="STRING" id="44689.Q54QA0"/>
<dbReference type="PaxDb" id="44689-DDB0232417"/>
<dbReference type="EnsemblProtists" id="EAL65478">
    <property type="protein sequence ID" value="EAL65478"/>
    <property type="gene ID" value="DDB_G0283981"/>
</dbReference>
<dbReference type="GeneID" id="8624368"/>
<dbReference type="KEGG" id="ddi:DDB_G0283981"/>
<dbReference type="dictyBase" id="DDB_G0283981">
    <property type="gene designation" value="pms1"/>
</dbReference>
<dbReference type="VEuPathDB" id="AmoebaDB:DDB_G0283981"/>
<dbReference type="eggNOG" id="KOG1978">
    <property type="taxonomic scope" value="Eukaryota"/>
</dbReference>
<dbReference type="HOGENOM" id="CLU_004131_0_2_1"/>
<dbReference type="InParanoid" id="Q54QA0"/>
<dbReference type="OMA" id="MRPRRMP"/>
<dbReference type="PhylomeDB" id="Q54QA0"/>
<dbReference type="Reactome" id="R-DDI-5358565">
    <property type="pathway name" value="Mismatch repair (MMR) directed by MSH2:MSH6 (MutSalpha)"/>
</dbReference>
<dbReference type="PRO" id="PR:Q54QA0"/>
<dbReference type="Proteomes" id="UP000002195">
    <property type="component" value="Chromosome 4"/>
</dbReference>
<dbReference type="GO" id="GO:0032389">
    <property type="term" value="C:MutLalpha complex"/>
    <property type="evidence" value="ECO:0000318"/>
    <property type="project" value="GO_Central"/>
</dbReference>
<dbReference type="GO" id="GO:0005524">
    <property type="term" value="F:ATP binding"/>
    <property type="evidence" value="ECO:0000250"/>
    <property type="project" value="dictyBase"/>
</dbReference>
<dbReference type="GO" id="GO:0016887">
    <property type="term" value="F:ATP hydrolysis activity"/>
    <property type="evidence" value="ECO:0000318"/>
    <property type="project" value="GO_Central"/>
</dbReference>
<dbReference type="GO" id="GO:0140664">
    <property type="term" value="F:ATP-dependent DNA damage sensor activity"/>
    <property type="evidence" value="ECO:0007669"/>
    <property type="project" value="InterPro"/>
</dbReference>
<dbReference type="GO" id="GO:0003677">
    <property type="term" value="F:DNA binding"/>
    <property type="evidence" value="ECO:0000250"/>
    <property type="project" value="dictyBase"/>
</dbReference>
<dbReference type="GO" id="GO:0030983">
    <property type="term" value="F:mismatched DNA binding"/>
    <property type="evidence" value="ECO:0007669"/>
    <property type="project" value="InterPro"/>
</dbReference>
<dbReference type="GO" id="GO:0006298">
    <property type="term" value="P:mismatch repair"/>
    <property type="evidence" value="ECO:0000250"/>
    <property type="project" value="dictyBase"/>
</dbReference>
<dbReference type="CDD" id="cd16926">
    <property type="entry name" value="HATPase_MutL-MLH-PMS-like"/>
    <property type="match status" value="1"/>
</dbReference>
<dbReference type="FunFam" id="3.30.230.10:FF:000290">
    <property type="entry name" value="Mismatch repair endonuclease pms1"/>
    <property type="match status" value="1"/>
</dbReference>
<dbReference type="FunFam" id="3.30.1370.100:FF:000001">
    <property type="entry name" value="Mismatch repair endonuclease pms1, putative"/>
    <property type="match status" value="1"/>
</dbReference>
<dbReference type="FunFam" id="3.30.565.10:FF:000014">
    <property type="entry name" value="Mismatch repair endonuclease pms1, putative"/>
    <property type="match status" value="1"/>
</dbReference>
<dbReference type="Gene3D" id="3.30.230.10">
    <property type="match status" value="1"/>
</dbReference>
<dbReference type="Gene3D" id="3.30.565.10">
    <property type="entry name" value="Histidine kinase-like ATPase, C-terminal domain"/>
    <property type="match status" value="1"/>
</dbReference>
<dbReference type="Gene3D" id="3.30.1540.20">
    <property type="entry name" value="MutL, C-terminal domain, dimerisation subdomain"/>
    <property type="match status" value="1"/>
</dbReference>
<dbReference type="Gene3D" id="3.30.1370.100">
    <property type="entry name" value="MutL, C-terminal domain, regulatory subdomain"/>
    <property type="match status" value="1"/>
</dbReference>
<dbReference type="InterPro" id="IPR014762">
    <property type="entry name" value="DNA_mismatch_repair_CS"/>
</dbReference>
<dbReference type="InterPro" id="IPR013507">
    <property type="entry name" value="DNA_mismatch_S5_2-like"/>
</dbReference>
<dbReference type="InterPro" id="IPR036890">
    <property type="entry name" value="HATPase_C_sf"/>
</dbReference>
<dbReference type="InterPro" id="IPR002099">
    <property type="entry name" value="MutL/Mlh/PMS"/>
</dbReference>
<dbReference type="InterPro" id="IPR038973">
    <property type="entry name" value="MutL/Mlh/Pms-like"/>
</dbReference>
<dbReference type="InterPro" id="IPR014790">
    <property type="entry name" value="MutL_C"/>
</dbReference>
<dbReference type="InterPro" id="IPR042120">
    <property type="entry name" value="MutL_C_dimsub"/>
</dbReference>
<dbReference type="InterPro" id="IPR042121">
    <property type="entry name" value="MutL_C_regsub"/>
</dbReference>
<dbReference type="InterPro" id="IPR037198">
    <property type="entry name" value="MutL_C_sf"/>
</dbReference>
<dbReference type="InterPro" id="IPR020568">
    <property type="entry name" value="Ribosomal_Su5_D2-typ_SF"/>
</dbReference>
<dbReference type="InterPro" id="IPR014721">
    <property type="entry name" value="Ribsml_uS5_D2-typ_fold_subgr"/>
</dbReference>
<dbReference type="NCBIfam" id="TIGR00585">
    <property type="entry name" value="mutl"/>
    <property type="match status" value="1"/>
</dbReference>
<dbReference type="PANTHER" id="PTHR10073">
    <property type="entry name" value="DNA MISMATCH REPAIR PROTEIN MLH, PMS, MUTL"/>
    <property type="match status" value="1"/>
</dbReference>
<dbReference type="PANTHER" id="PTHR10073:SF52">
    <property type="entry name" value="MISMATCH REPAIR ENDONUCLEASE PMS2"/>
    <property type="match status" value="1"/>
</dbReference>
<dbReference type="Pfam" id="PF01119">
    <property type="entry name" value="DNA_mis_repair"/>
    <property type="match status" value="1"/>
</dbReference>
<dbReference type="Pfam" id="PF13589">
    <property type="entry name" value="HATPase_c_3"/>
    <property type="match status" value="1"/>
</dbReference>
<dbReference type="Pfam" id="PF08676">
    <property type="entry name" value="MutL_C"/>
    <property type="match status" value="1"/>
</dbReference>
<dbReference type="SMART" id="SM01340">
    <property type="entry name" value="DNA_mis_repair"/>
    <property type="match status" value="1"/>
</dbReference>
<dbReference type="SMART" id="SM00853">
    <property type="entry name" value="MutL_C"/>
    <property type="match status" value="1"/>
</dbReference>
<dbReference type="SUPFAM" id="SSF55874">
    <property type="entry name" value="ATPase domain of HSP90 chaperone/DNA topoisomerase II/histidine kinase"/>
    <property type="match status" value="1"/>
</dbReference>
<dbReference type="SUPFAM" id="SSF118116">
    <property type="entry name" value="DNA mismatch repair protein MutL"/>
    <property type="match status" value="1"/>
</dbReference>
<dbReference type="SUPFAM" id="SSF54211">
    <property type="entry name" value="Ribosomal protein S5 domain 2-like"/>
    <property type="match status" value="1"/>
</dbReference>
<dbReference type="PROSITE" id="PS00058">
    <property type="entry name" value="DNA_MISMATCH_REPAIR_1"/>
    <property type="match status" value="1"/>
</dbReference>
<keyword id="KW-0131">Cell cycle</keyword>
<keyword id="KW-0227">DNA damage</keyword>
<keyword id="KW-0234">DNA repair</keyword>
<keyword id="KW-0539">Nucleus</keyword>
<keyword id="KW-1185">Reference proteome</keyword>
<organism>
    <name type="scientific">Dictyostelium discoideum</name>
    <name type="common">Social amoeba</name>
    <dbReference type="NCBI Taxonomy" id="44689"/>
    <lineage>
        <taxon>Eukaryota</taxon>
        <taxon>Amoebozoa</taxon>
        <taxon>Evosea</taxon>
        <taxon>Eumycetozoa</taxon>
        <taxon>Dictyostelia</taxon>
        <taxon>Dictyosteliales</taxon>
        <taxon>Dictyosteliaceae</taxon>
        <taxon>Dictyostelium</taxon>
    </lineage>
</organism>
<feature type="chain" id="PRO_0000331656" description="Mismatch repair endonuclease pms1">
    <location>
        <begin position="1"/>
        <end position="1022"/>
    </location>
</feature>
<feature type="region of interest" description="Disordered" evidence="2">
    <location>
        <begin position="251"/>
        <end position="282"/>
    </location>
</feature>
<feature type="region of interest" description="Disordered" evidence="2">
    <location>
        <begin position="390"/>
        <end position="527"/>
    </location>
</feature>
<feature type="region of interest" description="Disordered" evidence="2">
    <location>
        <begin position="622"/>
        <end position="676"/>
    </location>
</feature>
<feature type="compositionally biased region" description="Polar residues" evidence="2">
    <location>
        <begin position="403"/>
        <end position="412"/>
    </location>
</feature>
<feature type="compositionally biased region" description="Low complexity" evidence="2">
    <location>
        <begin position="436"/>
        <end position="469"/>
    </location>
</feature>
<feature type="compositionally biased region" description="Low complexity" evidence="2">
    <location>
        <begin position="647"/>
        <end position="664"/>
    </location>
</feature>
<comment type="function">
    <text evidence="1">Component of the post-replicative DNA mismatch repair system (MMR). Heterodimerizes with mlh1 to form MutL alpha. DNA repair is initiated by MutS alpha (msh2-msh6) or MutS beta (msh2-msh3) binding to a dsDNA mismatch, then MutL alpha is recruited to the heteroduplex. Assembly of the MutL-MutS-heteroduplex ternary complex in presence of rfc and pcna is sufficient to activate endonuclease activity of pms1. It introduces single-strand breaks near the mismatch and thus generates new entry points for the exonuclease exo1 to degrade the strand containing the mismatch (By similarity).</text>
</comment>
<comment type="subunit">
    <text evidence="1">Heterodimer of pms1 and mlh1 (MutL alpha). Forms a ternary complex with MutS alpha (msh2-msh6) or MutS beta (msh2-msh3) (By similarity).</text>
</comment>
<comment type="subcellular location">
    <subcellularLocation>
        <location evidence="1">Nucleus</location>
    </subcellularLocation>
</comment>
<comment type="similarity">
    <text evidence="3">Belongs to the DNA mismatch repair MutL/HexB family.</text>
</comment>
<sequence length="1022" mass="114606">MIKAIDKESINNICSGQVIFDLSIAVKELIENSIDAGATTVEIRLKEYGEEFIEVIDNGSGVEPSNFVALTMKHCTSKLESFSDLLSIETYGFRGEALSSLCSLSNCIITTRTKNQVTAQRLVFDKEGKIQTQTPVAREVGTTVQLSNLFKGLPVRYQEFKRNIKKEYAKLLTILQAYALISTNTRITCYNQAGKSPRSCVLSTTSGSTIRDNLINVFGTKMSQSLDEFTASDSLFKVNGLISKIGIGSGTGQSISNSSSSSSQSSSQLSSSSSSSSSSQSSQLSIGSLSRSCADRQFFFVNSRPFEHSKLAKEINSLYQSFHKRGSYPVVIFNIEMPTNNYDVNVTPDKRTIFIQKEQQLLLLITDGLKTMWETAQSVFDTNQLGQFTFNDENENDNSNNNKQSKISSFPNLYTLKTEEDENNNKITTPIKKHSTTTTTSSLNSPSSNKKSSNSTSSSSSSNNKNNRNNLEEDGDDSFDITDQQPLKRAKYDGNYNNSNKKPELPKTPYPNKKKNNENEDEDEDEDNYVQPVFSNVNKSKNSSNSGSSNSLDDIIDDNEFISRSNGNSSNFMDDFEFKGSSNNIGSSSNGIKLKTISNNNNSNNSNNSNKIIDDINKTIDKMKQQQQPQQKMGLNDDGDDEEQQKQKQQQQQQKRKQQQQQQQIEEEEEETIDGYKQKNSKTFDITIKTDLNTISKQYLIRNGTFDKDNNPIIPNTALVVSNDDMVVNNNNSNEFDQNSIITTTSEKCCIVDKSIPQLDGKFSTSLGGIGAKQQQKAATQVTSQLQQQPSQTNQKTAEEELTKFFKKEYFKQMIVIGQFNLGFIIAKLGNDLFIIDQHAADEKYNFEILSKSVESSINSQPLLKPDTLSDLTSEEELIIIENVDLFKKNGFKFIIDHDAPTRFKIKLSAFPIIHGQSFGIKDIYEWIFMIKESSIPGSVNKIPRLNSLLASKACRKSIMVGTTLTHKEMKDVLNNLSTLDNPWCCPHGRPTMRHLVDLSIKDKLKQQQQQQQQKQQQQQQQ</sequence>
<reference key="1">
    <citation type="journal article" date="2005" name="Nature">
        <title>The genome of the social amoeba Dictyostelium discoideum.</title>
        <authorList>
            <person name="Eichinger L."/>
            <person name="Pachebat J.A."/>
            <person name="Gloeckner G."/>
            <person name="Rajandream M.A."/>
            <person name="Sucgang R."/>
            <person name="Berriman M."/>
            <person name="Song J."/>
            <person name="Olsen R."/>
            <person name="Szafranski K."/>
            <person name="Xu Q."/>
            <person name="Tunggal B."/>
            <person name="Kummerfeld S."/>
            <person name="Madera M."/>
            <person name="Konfortov B.A."/>
            <person name="Rivero F."/>
            <person name="Bankier A.T."/>
            <person name="Lehmann R."/>
            <person name="Hamlin N."/>
            <person name="Davies R."/>
            <person name="Gaudet P."/>
            <person name="Fey P."/>
            <person name="Pilcher K."/>
            <person name="Chen G."/>
            <person name="Saunders D."/>
            <person name="Sodergren E.J."/>
            <person name="Davis P."/>
            <person name="Kerhornou A."/>
            <person name="Nie X."/>
            <person name="Hall N."/>
            <person name="Anjard C."/>
            <person name="Hemphill L."/>
            <person name="Bason N."/>
            <person name="Farbrother P."/>
            <person name="Desany B."/>
            <person name="Just E."/>
            <person name="Morio T."/>
            <person name="Rost R."/>
            <person name="Churcher C.M."/>
            <person name="Cooper J."/>
            <person name="Haydock S."/>
            <person name="van Driessche N."/>
            <person name="Cronin A."/>
            <person name="Goodhead I."/>
            <person name="Muzny D.M."/>
            <person name="Mourier T."/>
            <person name="Pain A."/>
            <person name="Lu M."/>
            <person name="Harper D."/>
            <person name="Lindsay R."/>
            <person name="Hauser H."/>
            <person name="James K.D."/>
            <person name="Quiles M."/>
            <person name="Madan Babu M."/>
            <person name="Saito T."/>
            <person name="Buchrieser C."/>
            <person name="Wardroper A."/>
            <person name="Felder M."/>
            <person name="Thangavelu M."/>
            <person name="Johnson D."/>
            <person name="Knights A."/>
            <person name="Loulseged H."/>
            <person name="Mungall K.L."/>
            <person name="Oliver K."/>
            <person name="Price C."/>
            <person name="Quail M.A."/>
            <person name="Urushihara H."/>
            <person name="Hernandez J."/>
            <person name="Rabbinowitsch E."/>
            <person name="Steffen D."/>
            <person name="Sanders M."/>
            <person name="Ma J."/>
            <person name="Kohara Y."/>
            <person name="Sharp S."/>
            <person name="Simmonds M.N."/>
            <person name="Spiegler S."/>
            <person name="Tivey A."/>
            <person name="Sugano S."/>
            <person name="White B."/>
            <person name="Walker D."/>
            <person name="Woodward J.R."/>
            <person name="Winckler T."/>
            <person name="Tanaka Y."/>
            <person name="Shaulsky G."/>
            <person name="Schleicher M."/>
            <person name="Weinstock G.M."/>
            <person name="Rosenthal A."/>
            <person name="Cox E.C."/>
            <person name="Chisholm R.L."/>
            <person name="Gibbs R.A."/>
            <person name="Loomis W.F."/>
            <person name="Platzer M."/>
            <person name="Kay R.R."/>
            <person name="Williams J.G."/>
            <person name="Dear P.H."/>
            <person name="Noegel A.A."/>
            <person name="Barrell B.G."/>
            <person name="Kuspa A."/>
        </authorList>
    </citation>
    <scope>NUCLEOTIDE SEQUENCE [LARGE SCALE GENOMIC DNA]</scope>
    <source>
        <strain>AX4</strain>
    </source>
</reference>
<proteinExistence type="inferred from homology"/>
<gene>
    <name type="primary">pms1</name>
    <name type="ORF">DDB_G0283981</name>
</gene>
<protein>
    <recommendedName>
        <fullName>Mismatch repair endonuclease pms1</fullName>
    </recommendedName>
</protein>
<accession>Q54QA0</accession>
<evidence type="ECO:0000250" key="1"/>
<evidence type="ECO:0000256" key="2">
    <source>
        <dbReference type="SAM" id="MobiDB-lite"/>
    </source>
</evidence>
<evidence type="ECO:0000305" key="3"/>